<organism evidence="6">
    <name type="scientific">Arabidopsis thaliana</name>
    <name type="common">Mouse-ear cress</name>
    <dbReference type="NCBI Taxonomy" id="3702"/>
    <lineage>
        <taxon>Eukaryota</taxon>
        <taxon>Viridiplantae</taxon>
        <taxon>Streptophyta</taxon>
        <taxon>Embryophyta</taxon>
        <taxon>Tracheophyta</taxon>
        <taxon>Spermatophyta</taxon>
        <taxon>Magnoliopsida</taxon>
        <taxon>eudicotyledons</taxon>
        <taxon>Gunneridae</taxon>
        <taxon>Pentapetalae</taxon>
        <taxon>rosids</taxon>
        <taxon>malvids</taxon>
        <taxon>Brassicales</taxon>
        <taxon>Brassicaceae</taxon>
        <taxon>Camelineae</taxon>
        <taxon>Arabidopsis</taxon>
    </lineage>
</organism>
<protein>
    <recommendedName>
        <fullName>AAA-ATPase At3g28570, mitochondrial</fullName>
        <ecNumber evidence="1">3.6.1.-</ecNumber>
    </recommendedName>
</protein>
<gene>
    <name evidence="4" type="ordered locus">At3g28570</name>
    <name evidence="5" type="ORF">MZN14.4</name>
</gene>
<dbReference type="EC" id="3.6.1.-" evidence="1"/>
<dbReference type="EMBL" id="AP000420">
    <property type="protein sequence ID" value="BAB02173.1"/>
    <property type="status" value="ALT_INIT"/>
    <property type="molecule type" value="Genomic_DNA"/>
</dbReference>
<dbReference type="EMBL" id="CP002686">
    <property type="protein sequence ID" value="AEE77461.1"/>
    <property type="molecule type" value="Genomic_DNA"/>
</dbReference>
<dbReference type="RefSeq" id="NP_001327276.1">
    <property type="nucleotide sequence ID" value="NM_001338960.1"/>
</dbReference>
<dbReference type="RefSeq" id="NP_189498.1">
    <property type="nucleotide sequence ID" value="NM_113777.1"/>
</dbReference>
<dbReference type="SMR" id="F4J0B7"/>
<dbReference type="FunCoup" id="F4J0B7">
    <property type="interactions" value="1325"/>
</dbReference>
<dbReference type="STRING" id="3702.F4J0B7"/>
<dbReference type="PaxDb" id="3702-AT3G28570.1"/>
<dbReference type="EnsemblPlants" id="AT3G28570.1">
    <property type="protein sequence ID" value="AT3G28570.1"/>
    <property type="gene ID" value="AT3G28570"/>
</dbReference>
<dbReference type="GeneID" id="822487"/>
<dbReference type="Gramene" id="AT3G28570.1">
    <property type="protein sequence ID" value="AT3G28570.1"/>
    <property type="gene ID" value="AT3G28570"/>
</dbReference>
<dbReference type="KEGG" id="ath:AT3G28570"/>
<dbReference type="Araport" id="AT3G28570"/>
<dbReference type="TAIR" id="AT3G28570"/>
<dbReference type="eggNOG" id="KOG0743">
    <property type="taxonomic scope" value="Eukaryota"/>
</dbReference>
<dbReference type="HOGENOM" id="CLU_010189_0_1_1"/>
<dbReference type="InParanoid" id="F4J0B7"/>
<dbReference type="OMA" id="PSPNWEM"/>
<dbReference type="PRO" id="PR:F4J0B7"/>
<dbReference type="Proteomes" id="UP000006548">
    <property type="component" value="Chromosome 3"/>
</dbReference>
<dbReference type="ExpressionAtlas" id="F4J0B7">
    <property type="expression patterns" value="baseline and differential"/>
</dbReference>
<dbReference type="GO" id="GO:0005739">
    <property type="term" value="C:mitochondrion"/>
    <property type="evidence" value="ECO:0007669"/>
    <property type="project" value="UniProtKB-SubCell"/>
</dbReference>
<dbReference type="GO" id="GO:0005524">
    <property type="term" value="F:ATP binding"/>
    <property type="evidence" value="ECO:0007669"/>
    <property type="project" value="UniProtKB-KW"/>
</dbReference>
<dbReference type="GO" id="GO:0016887">
    <property type="term" value="F:ATP hydrolysis activity"/>
    <property type="evidence" value="ECO:0007669"/>
    <property type="project" value="InterPro"/>
</dbReference>
<dbReference type="GO" id="GO:0006950">
    <property type="term" value="P:response to stress"/>
    <property type="evidence" value="ECO:0007669"/>
    <property type="project" value="UniProtKB-ARBA"/>
</dbReference>
<dbReference type="CDD" id="cd19510">
    <property type="entry name" value="RecA-like_BCS1"/>
    <property type="match status" value="1"/>
</dbReference>
<dbReference type="Gene3D" id="6.10.280.40">
    <property type="match status" value="1"/>
</dbReference>
<dbReference type="Gene3D" id="3.40.50.300">
    <property type="entry name" value="P-loop containing nucleotide triphosphate hydrolases"/>
    <property type="match status" value="1"/>
</dbReference>
<dbReference type="InterPro" id="IPR003593">
    <property type="entry name" value="AAA+_ATPase"/>
</dbReference>
<dbReference type="InterPro" id="IPR025753">
    <property type="entry name" value="AAA_N_dom"/>
</dbReference>
<dbReference type="InterPro" id="IPR003959">
    <property type="entry name" value="ATPase_AAA_core"/>
</dbReference>
<dbReference type="InterPro" id="IPR003960">
    <property type="entry name" value="ATPase_AAA_CS"/>
</dbReference>
<dbReference type="InterPro" id="IPR050747">
    <property type="entry name" value="Mitochondrial_chaperone_BCS1"/>
</dbReference>
<dbReference type="InterPro" id="IPR027417">
    <property type="entry name" value="P-loop_NTPase"/>
</dbReference>
<dbReference type="PANTHER" id="PTHR23070">
    <property type="entry name" value="BCS1 AAA-TYPE ATPASE"/>
    <property type="match status" value="1"/>
</dbReference>
<dbReference type="Pfam" id="PF00004">
    <property type="entry name" value="AAA"/>
    <property type="match status" value="1"/>
</dbReference>
<dbReference type="Pfam" id="PF14363">
    <property type="entry name" value="AAA_assoc"/>
    <property type="match status" value="1"/>
</dbReference>
<dbReference type="SMART" id="SM00382">
    <property type="entry name" value="AAA"/>
    <property type="match status" value="1"/>
</dbReference>
<dbReference type="SUPFAM" id="SSF52540">
    <property type="entry name" value="P-loop containing nucleoside triphosphate hydrolases"/>
    <property type="match status" value="1"/>
</dbReference>
<dbReference type="PROSITE" id="PS00674">
    <property type="entry name" value="AAA"/>
    <property type="match status" value="1"/>
</dbReference>
<reference key="1">
    <citation type="journal article" date="2000" name="DNA Res.">
        <title>Structural analysis of Arabidopsis thaliana chromosome 3. I. Sequence features of the regions of 4,504,864 bp covered by sixty P1 and TAC clones.</title>
        <authorList>
            <person name="Sato S."/>
            <person name="Nakamura Y."/>
            <person name="Kaneko T."/>
            <person name="Katoh T."/>
            <person name="Asamizu E."/>
            <person name="Tabata S."/>
        </authorList>
    </citation>
    <scope>NUCLEOTIDE SEQUENCE [LARGE SCALE GENOMIC DNA]</scope>
    <source>
        <strain>cv. Columbia</strain>
    </source>
</reference>
<reference key="2">
    <citation type="journal article" date="2017" name="Plant J.">
        <title>Araport11: a complete reannotation of the Arabidopsis thaliana reference genome.</title>
        <authorList>
            <person name="Cheng C.Y."/>
            <person name="Krishnakumar V."/>
            <person name="Chan A.P."/>
            <person name="Thibaud-Nissen F."/>
            <person name="Schobel S."/>
            <person name="Town C.D."/>
        </authorList>
    </citation>
    <scope>GENOME REANNOTATION</scope>
    <source>
        <strain>cv. Columbia</strain>
    </source>
</reference>
<sequence>MFAENLTRIGSNVAGLFFVWSTLKRYFPRQIQQLLFNAIQRIPIFKRLSDKILEFFSPYAYIRFREIEGYRYNYAFAAVKTYLGAKVNSEVKNLKGNQVKENMSLDLKRDDVKIEEEYEGVKMWWEIFRCVKGKKICRLTFHRSNWDVVTGSYLRYVVEEGKSIKARKKKVMVLMNNPSLNWKTSMKGLWTCTEFEHPATFDTLAMDIDKKDEIFRDLVAFRDGKEYYDRIGKAWKRGYLLYGPPGTGKSTMIAAMANLMKYNIYDLELTSIGNNWELKKLLIATTNKSIIVIEDIDCSLDLTGEREVKDLKGDKEGKKSNAVTLSGLLNFIDGIWSACGQERILVFTTNHVGKLDQALIRRGRMDMHIELSYCTFGAFKILAKNYLNIDSHHLFGEIESLLKETKITPADVAEHMMAKEVDGSLKGLIRALERIKWSQNVKVEEQLQQGD</sequence>
<keyword id="KW-0067">ATP-binding</keyword>
<keyword id="KW-0378">Hydrolase</keyword>
<keyword id="KW-0460">Magnesium</keyword>
<keyword id="KW-0496">Mitochondrion</keyword>
<keyword id="KW-0547">Nucleotide-binding</keyword>
<keyword id="KW-1185">Reference proteome</keyword>
<keyword id="KW-0809">Transit peptide</keyword>
<comment type="catalytic activity">
    <reaction evidence="1">
        <text>ATP + H2O = ADP + phosphate + H(+)</text>
        <dbReference type="Rhea" id="RHEA:13065"/>
        <dbReference type="ChEBI" id="CHEBI:15377"/>
        <dbReference type="ChEBI" id="CHEBI:15378"/>
        <dbReference type="ChEBI" id="CHEBI:30616"/>
        <dbReference type="ChEBI" id="CHEBI:43474"/>
        <dbReference type="ChEBI" id="CHEBI:456216"/>
    </reaction>
</comment>
<comment type="cofactor">
    <cofactor evidence="1">
        <name>Mg(2+)</name>
        <dbReference type="ChEBI" id="CHEBI:18420"/>
    </cofactor>
</comment>
<comment type="subcellular location">
    <subcellularLocation>
        <location evidence="2">Mitochondrion</location>
    </subcellularLocation>
</comment>
<comment type="similarity">
    <text evidence="3">Belongs to the AAA ATPase family. BCS1 subfamily.</text>
</comment>
<comment type="sequence caution" evidence="3">
    <conflict type="erroneous initiation">
        <sequence resource="EMBL-CDS" id="BAB02173"/>
    </conflict>
    <text>Extended N-terminus.</text>
</comment>
<proteinExistence type="inferred from homology"/>
<feature type="transit peptide" description="Mitochondrion" evidence="2">
    <location>
        <begin position="1"/>
        <end position="48"/>
    </location>
</feature>
<feature type="chain" id="PRO_0000434710" description="AAA-ATPase At3g28570, mitochondrial" evidence="2">
    <location>
        <begin position="49"/>
        <end position="451"/>
    </location>
</feature>
<feature type="binding site" evidence="2">
    <location>
        <begin position="243"/>
        <end position="250"/>
    </location>
    <ligand>
        <name>ATP</name>
        <dbReference type="ChEBI" id="CHEBI:30616"/>
    </ligand>
</feature>
<name>AATP8_ARATH</name>
<accession>F4J0B7</accession>
<accession>Q9LJJ8</accession>
<evidence type="ECO:0000250" key="1">
    <source>
        <dbReference type="UniProtKB" id="Q9FLD5"/>
    </source>
</evidence>
<evidence type="ECO:0000255" key="2"/>
<evidence type="ECO:0000305" key="3"/>
<evidence type="ECO:0000312" key="4">
    <source>
        <dbReference type="EMBL" id="AEE77461.1"/>
    </source>
</evidence>
<evidence type="ECO:0000312" key="5">
    <source>
        <dbReference type="EMBL" id="BAB02173.1"/>
    </source>
</evidence>
<evidence type="ECO:0000312" key="6">
    <source>
        <dbReference type="Proteomes" id="UP000006548"/>
    </source>
</evidence>